<feature type="chain" id="PRO_0000425217" description="Phosphatidylcholine synthase">
    <location>
        <begin position="1"/>
        <end position="234"/>
    </location>
</feature>
<feature type="topological domain" description="Cytoplasmic" evidence="1 2">
    <location>
        <begin position="1"/>
        <end position="3"/>
    </location>
</feature>
<feature type="transmembrane region" description="Helical; Name=1" evidence="2">
    <location>
        <begin position="4"/>
        <end position="24"/>
    </location>
</feature>
<feature type="topological domain" description="Periplasmic" evidence="2">
    <location>
        <begin position="25"/>
        <end position="26"/>
    </location>
</feature>
<feature type="transmembrane region" description="Helical; Name=2" evidence="2">
    <location>
        <begin position="27"/>
        <end position="47"/>
    </location>
</feature>
<feature type="topological domain" description="Cytoplasmic" evidence="2">
    <location>
        <begin position="48"/>
        <end position="75"/>
    </location>
</feature>
<feature type="transmembrane region" description="Helical; Name=3" evidence="2">
    <location>
        <begin position="76"/>
        <end position="96"/>
    </location>
</feature>
<feature type="topological domain" description="Periplasmic" evidence="2">
    <location>
        <begin position="97"/>
        <end position="98"/>
    </location>
</feature>
<feature type="transmembrane region" description="Helical; Name=4" evidence="2">
    <location>
        <begin position="99"/>
        <end position="116"/>
    </location>
</feature>
<feature type="topological domain" description="Cytoplasmic" evidence="2">
    <location>
        <begin position="117"/>
        <end position="126"/>
    </location>
</feature>
<feature type="transmembrane region" description="Helical; Name=5" evidence="2">
    <location>
        <begin position="127"/>
        <end position="147"/>
    </location>
</feature>
<feature type="topological domain" description="Periplasmic" evidence="2">
    <location>
        <begin position="148"/>
        <end position="149"/>
    </location>
</feature>
<feature type="transmembrane region" description="Helical; Name=6" evidence="2">
    <location>
        <begin position="150"/>
        <end position="170"/>
    </location>
</feature>
<feature type="topological domain" description="Cytoplasmic" evidence="2">
    <location>
        <begin position="171"/>
        <end position="180"/>
    </location>
</feature>
<feature type="transmembrane region" description="Helical; Name=7" evidence="2">
    <location>
        <begin position="181"/>
        <end position="201"/>
    </location>
</feature>
<feature type="topological domain" description="Periplasmic" evidence="2">
    <location>
        <begin position="202"/>
        <end position="207"/>
    </location>
</feature>
<feature type="transmembrane region" description="Helical; Name=8" evidence="2">
    <location>
        <begin position="208"/>
        <end position="228"/>
    </location>
</feature>
<feature type="topological domain" description="Cytoplasmic" evidence="1 2">
    <location>
        <begin position="229"/>
        <end position="234"/>
    </location>
</feature>
<evidence type="ECO:0000250" key="1">
    <source>
        <dbReference type="UniProtKB" id="Q9KJY8"/>
    </source>
</evidence>
<evidence type="ECO:0000255" key="2"/>
<evidence type="ECO:0000269" key="3">
    <source>
    </source>
</evidence>
<evidence type="ECO:0000269" key="4">
    <source>
    </source>
</evidence>
<evidence type="ECO:0000303" key="5">
    <source>
    </source>
</evidence>
<evidence type="ECO:0000303" key="6">
    <source>
    </source>
</evidence>
<evidence type="ECO:0000305" key="7"/>
<evidence type="ECO:0000312" key="8">
    <source>
        <dbReference type="EMBL" id="AAB91497.1"/>
    </source>
</evidence>
<reference evidence="8" key="1">
    <citation type="journal article" date="1997" name="Nature">
        <title>Genomic sequence of a Lyme disease spirochaete, Borrelia burgdorferi.</title>
        <authorList>
            <person name="Fraser C.M."/>
            <person name="Casjens S."/>
            <person name="Huang W.M."/>
            <person name="Sutton G.G."/>
            <person name="Clayton R.A."/>
            <person name="Lathigra R."/>
            <person name="White O."/>
            <person name="Ketchum K.A."/>
            <person name="Dodson R.J."/>
            <person name="Hickey E.K."/>
            <person name="Gwinn M.L."/>
            <person name="Dougherty B.A."/>
            <person name="Tomb J.-F."/>
            <person name="Fleischmann R.D."/>
            <person name="Richardson D.L."/>
            <person name="Peterson J.D."/>
            <person name="Kerlavage A.R."/>
            <person name="Quackenbush J."/>
            <person name="Salzberg S.L."/>
            <person name="Hanson M."/>
            <person name="van Vugt R."/>
            <person name="Palmer N."/>
            <person name="Adams M.D."/>
            <person name="Gocayne J.D."/>
            <person name="Weidman J.F."/>
            <person name="Utterback T.R."/>
            <person name="Watthey L."/>
            <person name="McDonald L.A."/>
            <person name="Artiach P."/>
            <person name="Bowman C."/>
            <person name="Garland S.A."/>
            <person name="Fujii C."/>
            <person name="Cotton M.D."/>
            <person name="Horst K."/>
            <person name="Roberts K.M."/>
            <person name="Hatch B."/>
            <person name="Smith H.O."/>
            <person name="Venter J.C."/>
        </authorList>
    </citation>
    <scope>NUCLEOTIDE SEQUENCE [LARGE SCALE GENOMIC DNA]</scope>
    <source>
        <strain>ATCC 35210 / DSM 4680 / CIP 102532 / B31</strain>
    </source>
</reference>
<reference evidence="7" key="2">
    <citation type="journal article" date="2003" name="Microbiology">
        <title>Pathways for phosphatidylcholine biosynthesis in bacteria.</title>
        <authorList>
            <person name="Martinez-Morales F."/>
            <person name="Schobert M."/>
            <person name="Lopez-Lara I.M."/>
            <person name="Geiger O."/>
        </authorList>
    </citation>
    <scope>FUNCTION</scope>
    <scope>CATALYTIC ACTIVITY</scope>
    <source>
        <strain evidence="3">ATCC 35210 / DSM 4680 / CIP 102532 / B31</strain>
    </source>
</reference>
<reference evidence="7" key="3">
    <citation type="journal article" date="2004" name="Microbiology">
        <title>Phospholipid synthesis in Borrelia burgdorferi: BB0249 and BB0721 encode functional phosphatidylcholine synthase and phosphatidylglycerolphosphate synthase proteins.</title>
        <authorList>
            <person name="Wang X.G."/>
            <person name="Scagliotti J.P."/>
            <person name="Hu L.T."/>
        </authorList>
    </citation>
    <scope>FUNCTION</scope>
    <scope>CATALYTIC ACTIVITY</scope>
    <source>
        <strain evidence="4">ATCC 35210 / DSM 4680 / CIP 102532 / B31</strain>
    </source>
</reference>
<sequence length="234" mass="26678">MKNINLILAWLVHIFTASGLIVGLYSIISIVNGNYSLLLKLTVIGLIIDGIDGTMARKLKVKELIPEIDGTLLDNITDYINYTFIPVIFFYLGEFIEEKYKVAICIGILLSSAYQFSRTDAKTNDNYFRGFPSLWNLFVILNIIFKMEQITNLITMSICIITSFIPIKFIYPSKTKELRKITIPITIISCLIFVVSIFSELSTTALKMAKTVLILYFAYLTLASIYLTYKTRNR</sequence>
<organism>
    <name type="scientific">Borreliella burgdorferi (strain ATCC 35210 / DSM 4680 / CIP 102532 / B31)</name>
    <name type="common">Borrelia burgdorferi</name>
    <dbReference type="NCBI Taxonomy" id="224326"/>
    <lineage>
        <taxon>Bacteria</taxon>
        <taxon>Pseudomonadati</taxon>
        <taxon>Spirochaetota</taxon>
        <taxon>Spirochaetia</taxon>
        <taxon>Spirochaetales</taxon>
        <taxon>Borreliaceae</taxon>
        <taxon>Borreliella</taxon>
    </lineage>
</organism>
<comment type="function">
    <text evidence="3 4">Condenses choline with CDP-diglyceride to produce phosphatidylcholine and CMP.</text>
</comment>
<comment type="catalytic activity">
    <reaction evidence="3 4">
        <text>a CDP-1,2-diacyl-sn-glycerol + choline = a 1,2-diacyl-sn-glycero-3-phosphocholine + CMP + H(+)</text>
        <dbReference type="Rhea" id="RHEA:14597"/>
        <dbReference type="ChEBI" id="CHEBI:15354"/>
        <dbReference type="ChEBI" id="CHEBI:15378"/>
        <dbReference type="ChEBI" id="CHEBI:57643"/>
        <dbReference type="ChEBI" id="CHEBI:58332"/>
        <dbReference type="ChEBI" id="CHEBI:60377"/>
        <dbReference type="EC" id="2.7.8.24"/>
    </reaction>
</comment>
<comment type="cofactor">
    <cofactor evidence="1">
        <name>Mn(2+)</name>
        <dbReference type="ChEBI" id="CHEBI:29035"/>
    </cofactor>
</comment>
<comment type="subcellular location">
    <subcellularLocation>
        <location evidence="1">Cell inner membrane</location>
        <topology evidence="1">Multi-pass membrane protein</topology>
    </subcellularLocation>
</comment>
<comment type="similarity">
    <text evidence="2">Belongs to the CDP-alcohol phosphatidyltransferase class-I family.</text>
</comment>
<proteinExistence type="evidence at protein level"/>
<keyword id="KW-0997">Cell inner membrane</keyword>
<keyword id="KW-1003">Cell membrane</keyword>
<keyword id="KW-0444">Lipid biosynthesis</keyword>
<keyword id="KW-0443">Lipid metabolism</keyword>
<keyword id="KW-0464">Manganese</keyword>
<keyword id="KW-0472">Membrane</keyword>
<keyword id="KW-0594">Phospholipid biosynthesis</keyword>
<keyword id="KW-1208">Phospholipid metabolism</keyword>
<keyword id="KW-1185">Reference proteome</keyword>
<keyword id="KW-0808">Transferase</keyword>
<keyword id="KW-0812">Transmembrane</keyword>
<keyword id="KW-1133">Transmembrane helix</keyword>
<gene>
    <name evidence="6" type="primary">pcs</name>
    <name type="ordered locus">BB_0249</name>
</gene>
<protein>
    <recommendedName>
        <fullName evidence="5 6">Phosphatidylcholine synthase</fullName>
        <shortName evidence="1">PC synthase</shortName>
        <shortName evidence="5 6">PCS</shortName>
        <ecNumber evidence="3 4">2.7.8.24</ecNumber>
    </recommendedName>
    <alternativeName>
        <fullName evidence="1 8">CDP-diglyceride-choline O-phosphatidyltransferase</fullName>
    </alternativeName>
</protein>
<name>PCS_BORBU</name>
<dbReference type="EC" id="2.7.8.24" evidence="3 4"/>
<dbReference type="EMBL" id="AE000783">
    <property type="protein sequence ID" value="AAB91497.1"/>
    <property type="molecule type" value="Genomic_DNA"/>
</dbReference>
<dbReference type="PIR" id="A70131">
    <property type="entry name" value="A70131"/>
</dbReference>
<dbReference type="RefSeq" id="NP_212383.1">
    <property type="nucleotide sequence ID" value="NC_001318.1"/>
</dbReference>
<dbReference type="SMR" id="O51265"/>
<dbReference type="STRING" id="224326.BB_0249"/>
<dbReference type="PaxDb" id="224326-BB_0249"/>
<dbReference type="EnsemblBacteria" id="AAB91497">
    <property type="protein sequence ID" value="AAB91497"/>
    <property type="gene ID" value="BB_0249"/>
</dbReference>
<dbReference type="KEGG" id="bbu:BB_0249"/>
<dbReference type="PATRIC" id="fig|224326.49.peg.648"/>
<dbReference type="HOGENOM" id="CLU_086279_0_0_12"/>
<dbReference type="OrthoDB" id="350520at2"/>
<dbReference type="BRENDA" id="2.7.8.24">
    <property type="organism ID" value="902"/>
</dbReference>
<dbReference type="Proteomes" id="UP000001807">
    <property type="component" value="Chromosome"/>
</dbReference>
<dbReference type="GO" id="GO:0005886">
    <property type="term" value="C:plasma membrane"/>
    <property type="evidence" value="ECO:0007669"/>
    <property type="project" value="UniProtKB-SubCell"/>
</dbReference>
<dbReference type="GO" id="GO:0050520">
    <property type="term" value="F:phosphatidylcholine synthase activity"/>
    <property type="evidence" value="ECO:0000314"/>
    <property type="project" value="UniProtKB"/>
</dbReference>
<dbReference type="GO" id="GO:0008654">
    <property type="term" value="P:phospholipid biosynthetic process"/>
    <property type="evidence" value="ECO:0000314"/>
    <property type="project" value="UniProtKB"/>
</dbReference>
<dbReference type="FunFam" id="1.20.120.1760:FF:000050">
    <property type="entry name" value="Phosphatidylcholine synthase"/>
    <property type="match status" value="1"/>
</dbReference>
<dbReference type="Gene3D" id="1.20.120.1760">
    <property type="match status" value="1"/>
</dbReference>
<dbReference type="InterPro" id="IPR000462">
    <property type="entry name" value="CDP-OH_P_trans"/>
</dbReference>
<dbReference type="InterPro" id="IPR043130">
    <property type="entry name" value="CDP-OH_PTrfase_TM_dom"/>
</dbReference>
<dbReference type="InterPro" id="IPR026027">
    <property type="entry name" value="PcS"/>
</dbReference>
<dbReference type="NCBIfam" id="NF045885">
    <property type="entry name" value="PhCholSynBorr"/>
    <property type="match status" value="1"/>
</dbReference>
<dbReference type="Pfam" id="PF01066">
    <property type="entry name" value="CDP-OH_P_transf"/>
    <property type="match status" value="1"/>
</dbReference>
<dbReference type="PIRSF" id="PIRSF000851">
    <property type="entry name" value="PcS"/>
    <property type="match status" value="1"/>
</dbReference>
<accession>O51265</accession>